<gene>
    <name type="primary">SUPT4H1</name>
    <name type="synonym">SPT4H</name>
    <name type="synonym">SUPT4H</name>
</gene>
<comment type="function">
    <text evidence="2 3 4 6 7 8 9 10 12 13 14 20 21">Component of the DRB sensitivity-inducing factor complex (DSIF complex), which regulates mRNA processing and transcription elongation by RNA polymerase II (PubMed:10075709, PubMed:10199401, PubMed:10454543, PubMed:10912001, PubMed:11112772, PubMed:11553615, PubMed:12653964, PubMed:12718890, PubMed:15136722, PubMed:15380072, PubMed:9450929, PubMed:9857195). DSIF positively regulates mRNA capping by stimulating the mRNA guanylyltransferase activity of RNGTT/CAP1A (PubMed:15136722). DSIF also acts cooperatively with the negative elongation factor complex (NELF complex) to enhance transcriptional pausing at sites proximal to the promoter (PubMed:10199401, PubMed:10912001, PubMed:11112772). Transcriptional pausing may facilitate the assembly of an elongation competent RNA polymerase II complex (PubMed:10199401, PubMed:10912001, PubMed:11112772). DSIF and NELF promote pausing by inhibition of the transcription elongation factor TFIIS/S-II (PubMed:10199401, PubMed:10912001, PubMed:11112772). TFIIS/S-II binds to RNA polymerase II at transcription pause sites and stimulates the weak intrinsic nuclease activity of the enzyme (PubMed:16214896). Cleavage of blocked transcripts by RNA polymerase II promotes the resumption of transcription from the new 3' terminus and may allow repeated attempts at transcription through natural pause sites (PubMed:16214896). DSIF can also positively regulate transcriptional elongation and is required for the efficient activation of transcriptional elongation by the HIV-1 nuclear transcriptional activator, Tat (PubMed:11112772). DSIF acts to suppress transcriptional pausing in transcripts derived from the HIV-1 LTR and blocks premature release of HIV-1 transcripts at terminator sequences (PubMed:11112772).</text>
</comment>
<comment type="subunit">
    <text evidence="2 5 9 10 11 15 16 20">Interacts with SUPT5H to form DSIF. DSIF interacts with the positive transcription elongation factor b complex (P-TEFb complex), which is composed of CDK9 and cyclin-T (CCNT1 or CCNT2). DSIF interacts with RNA polymerase II (Pol II); forms DNA and RNA clamps that stabilize Pol II elongation complex while maintaining the nontemplate DNA strand in the transcription bubble and nascent RNA in the exit channel. This interaction is reduced by phosphorylation of the C-terminal domain (CTD) of POLR2A by P-TEFb. DSIF also interacts with the NELF complex, which is composed of NELFA, NELFB, NELFD and NELFE, and this interaction occurs following prior binding of DSIF to RNA polymerase II. DSIF also interacts with PRMT1/HRMT1L2, HTATSF1/TATSF1, RNGTT/CAP1A, PRMT5/SKB1, SUPT6H, and can interact with PIN1.</text>
</comment>
<comment type="interaction">
    <interactant intactId="EBI-727250">
        <id>P63272</id>
    </interactant>
    <interactant intactId="EBI-710464">
        <id>O00267</id>
        <label>SUPT5H</label>
    </interactant>
    <organismsDiffer>false</organismsDiffer>
    <experiments>16</experiments>
</comment>
<comment type="subcellular location">
    <subcellularLocation>
        <location evidence="18">Nucleus</location>
    </subcellularLocation>
</comment>
<comment type="tissue specificity">
    <text evidence="18 19">Widely expressed.</text>
</comment>
<comment type="PTM">
    <text evidence="17">Ubiquitinated by UBR5 when not assembled in the DSIF complex, leading to its degradation: UBR5 recognizes and binds a degron that is not accessible when SUPT4H1 is part of the DSIF complex.</text>
</comment>
<comment type="similarity">
    <text evidence="22">Belongs to the SPT4 family.</text>
</comment>
<name>SPT4H_HUMAN</name>
<reference key="1">
    <citation type="journal article" date="1996" name="Genomics">
        <title>Isolation and characterization of the human and mouse homologues (SUPT4H and Supt4h) of the yeast SPT4 gene.</title>
        <authorList>
            <person name="Chiang P.-W."/>
            <person name="Wang S.-Q."/>
            <person name="Smithivas P."/>
            <person name="Song W.-J."/>
            <person name="Crombez E."/>
            <person name="Akhtar A."/>
            <person name="Im R."/>
            <person name="Greenfield J."/>
            <person name="Ramamoorthy S."/>
            <person name="van Keuren M.L."/>
            <person name="Blackburn C.C."/>
            <person name="Tsai C.-H."/>
            <person name="Kurnit D.M."/>
        </authorList>
    </citation>
    <scope>NUCLEOTIDE SEQUENCE [MRNA]</scope>
    <scope>TISSUE SPECIFICITY</scope>
</reference>
<reference key="2">
    <citation type="journal article" date="1996" name="Mol. Cell. Biol.">
        <title>Identification and analysis of a functional human homolog of the SPT4 gene of Saccharomyces cerevisiae.</title>
        <authorList>
            <person name="Hartzog G.A."/>
            <person name="Basrai M.A."/>
            <person name="Ricupero-Hovasse S.L."/>
            <person name="Hieter P."/>
            <person name="Winston F."/>
        </authorList>
    </citation>
    <scope>NUCLEOTIDE SEQUENCE [MRNA]</scope>
    <scope>SUBCELLULAR LOCATION</scope>
    <scope>TISSUE SPECIFICITY</scope>
</reference>
<reference key="3">
    <citation type="journal article" date="2004" name="Nat. Genet.">
        <title>Complete sequencing and characterization of 21,243 full-length human cDNAs.</title>
        <authorList>
            <person name="Ota T."/>
            <person name="Suzuki Y."/>
            <person name="Nishikawa T."/>
            <person name="Otsuki T."/>
            <person name="Sugiyama T."/>
            <person name="Irie R."/>
            <person name="Wakamatsu A."/>
            <person name="Hayashi K."/>
            <person name="Sato H."/>
            <person name="Nagai K."/>
            <person name="Kimura K."/>
            <person name="Makita H."/>
            <person name="Sekine M."/>
            <person name="Obayashi M."/>
            <person name="Nishi T."/>
            <person name="Shibahara T."/>
            <person name="Tanaka T."/>
            <person name="Ishii S."/>
            <person name="Yamamoto J."/>
            <person name="Saito K."/>
            <person name="Kawai Y."/>
            <person name="Isono Y."/>
            <person name="Nakamura Y."/>
            <person name="Nagahari K."/>
            <person name="Murakami K."/>
            <person name="Yasuda T."/>
            <person name="Iwayanagi T."/>
            <person name="Wagatsuma M."/>
            <person name="Shiratori A."/>
            <person name="Sudo H."/>
            <person name="Hosoiri T."/>
            <person name="Kaku Y."/>
            <person name="Kodaira H."/>
            <person name="Kondo H."/>
            <person name="Sugawara M."/>
            <person name="Takahashi M."/>
            <person name="Kanda K."/>
            <person name="Yokoi T."/>
            <person name="Furuya T."/>
            <person name="Kikkawa E."/>
            <person name="Omura Y."/>
            <person name="Abe K."/>
            <person name="Kamihara K."/>
            <person name="Katsuta N."/>
            <person name="Sato K."/>
            <person name="Tanikawa M."/>
            <person name="Yamazaki M."/>
            <person name="Ninomiya K."/>
            <person name="Ishibashi T."/>
            <person name="Yamashita H."/>
            <person name="Murakawa K."/>
            <person name="Fujimori K."/>
            <person name="Tanai H."/>
            <person name="Kimata M."/>
            <person name="Watanabe M."/>
            <person name="Hiraoka S."/>
            <person name="Chiba Y."/>
            <person name="Ishida S."/>
            <person name="Ono Y."/>
            <person name="Takiguchi S."/>
            <person name="Watanabe S."/>
            <person name="Yosida M."/>
            <person name="Hotuta T."/>
            <person name="Kusano J."/>
            <person name="Kanehori K."/>
            <person name="Takahashi-Fujii A."/>
            <person name="Hara H."/>
            <person name="Tanase T.-O."/>
            <person name="Nomura Y."/>
            <person name="Togiya S."/>
            <person name="Komai F."/>
            <person name="Hara R."/>
            <person name="Takeuchi K."/>
            <person name="Arita M."/>
            <person name="Imose N."/>
            <person name="Musashino K."/>
            <person name="Yuuki H."/>
            <person name="Oshima A."/>
            <person name="Sasaki N."/>
            <person name="Aotsuka S."/>
            <person name="Yoshikawa Y."/>
            <person name="Matsunawa H."/>
            <person name="Ichihara T."/>
            <person name="Shiohata N."/>
            <person name="Sano S."/>
            <person name="Moriya S."/>
            <person name="Momiyama H."/>
            <person name="Satoh N."/>
            <person name="Takami S."/>
            <person name="Terashima Y."/>
            <person name="Suzuki O."/>
            <person name="Nakagawa S."/>
            <person name="Senoh A."/>
            <person name="Mizoguchi H."/>
            <person name="Goto Y."/>
            <person name="Shimizu F."/>
            <person name="Wakebe H."/>
            <person name="Hishigaki H."/>
            <person name="Watanabe T."/>
            <person name="Sugiyama A."/>
            <person name="Takemoto M."/>
            <person name="Kawakami B."/>
            <person name="Yamazaki M."/>
            <person name="Watanabe K."/>
            <person name="Kumagai A."/>
            <person name="Itakura S."/>
            <person name="Fukuzumi Y."/>
            <person name="Fujimori Y."/>
            <person name="Komiyama M."/>
            <person name="Tashiro H."/>
            <person name="Tanigami A."/>
            <person name="Fujiwara T."/>
            <person name="Ono T."/>
            <person name="Yamada K."/>
            <person name="Fujii Y."/>
            <person name="Ozaki K."/>
            <person name="Hirao M."/>
            <person name="Ohmori Y."/>
            <person name="Kawabata A."/>
            <person name="Hikiji T."/>
            <person name="Kobatake N."/>
            <person name="Inagaki H."/>
            <person name="Ikema Y."/>
            <person name="Okamoto S."/>
            <person name="Okitani R."/>
            <person name="Kawakami T."/>
            <person name="Noguchi S."/>
            <person name="Itoh T."/>
            <person name="Shigeta K."/>
            <person name="Senba T."/>
            <person name="Matsumura K."/>
            <person name="Nakajima Y."/>
            <person name="Mizuno T."/>
            <person name="Morinaga M."/>
            <person name="Sasaki M."/>
            <person name="Togashi T."/>
            <person name="Oyama M."/>
            <person name="Hata H."/>
            <person name="Watanabe M."/>
            <person name="Komatsu T."/>
            <person name="Mizushima-Sugano J."/>
            <person name="Satoh T."/>
            <person name="Shirai Y."/>
            <person name="Takahashi Y."/>
            <person name="Nakagawa K."/>
            <person name="Okumura K."/>
            <person name="Nagase T."/>
            <person name="Nomura N."/>
            <person name="Kikuchi H."/>
            <person name="Masuho Y."/>
            <person name="Yamashita R."/>
            <person name="Nakai K."/>
            <person name="Yada T."/>
            <person name="Nakamura Y."/>
            <person name="Ohara O."/>
            <person name="Isogai T."/>
            <person name="Sugano S."/>
        </authorList>
    </citation>
    <scope>NUCLEOTIDE SEQUENCE [LARGE SCALE MRNA]</scope>
    <source>
        <tissue>Dermoid cancer</tissue>
        <tissue>Testis</tissue>
    </source>
</reference>
<reference key="4">
    <citation type="submission" date="2004-05" db="EMBL/GenBank/DDBJ databases">
        <title>Cloning of human full open reading frames in Gateway(TM) system entry vector (pDONR201).</title>
        <authorList>
            <person name="Ebert L."/>
            <person name="Schick M."/>
            <person name="Neubert P."/>
            <person name="Schatten R."/>
            <person name="Henze S."/>
            <person name="Korn B."/>
        </authorList>
    </citation>
    <scope>NUCLEOTIDE SEQUENCE [LARGE SCALE MRNA]</scope>
</reference>
<reference key="5">
    <citation type="submission" date="2005-09" db="EMBL/GenBank/DDBJ databases">
        <authorList>
            <person name="Mural R.J."/>
            <person name="Istrail S."/>
            <person name="Sutton G.G."/>
            <person name="Florea L."/>
            <person name="Halpern A.L."/>
            <person name="Mobarry C.M."/>
            <person name="Lippert R."/>
            <person name="Walenz B."/>
            <person name="Shatkay H."/>
            <person name="Dew I."/>
            <person name="Miller J.R."/>
            <person name="Flanigan M.J."/>
            <person name="Edwards N.J."/>
            <person name="Bolanos R."/>
            <person name="Fasulo D."/>
            <person name="Halldorsson B.V."/>
            <person name="Hannenhalli S."/>
            <person name="Turner R."/>
            <person name="Yooseph S."/>
            <person name="Lu F."/>
            <person name="Nusskern D.R."/>
            <person name="Shue B.C."/>
            <person name="Zheng X.H."/>
            <person name="Zhong F."/>
            <person name="Delcher A.L."/>
            <person name="Huson D.H."/>
            <person name="Kravitz S.A."/>
            <person name="Mouchard L."/>
            <person name="Reinert K."/>
            <person name="Remington K.A."/>
            <person name="Clark A.G."/>
            <person name="Waterman M.S."/>
            <person name="Eichler E.E."/>
            <person name="Adams M.D."/>
            <person name="Hunkapiller M.W."/>
            <person name="Myers E.W."/>
            <person name="Venter J.C."/>
        </authorList>
    </citation>
    <scope>NUCLEOTIDE SEQUENCE [LARGE SCALE GENOMIC DNA]</scope>
</reference>
<reference key="6">
    <citation type="journal article" date="2004" name="Genome Res.">
        <title>The status, quality, and expansion of the NIH full-length cDNA project: the Mammalian Gene Collection (MGC).</title>
        <authorList>
            <consortium name="The MGC Project Team"/>
        </authorList>
    </citation>
    <scope>NUCLEOTIDE SEQUENCE [LARGE SCALE MRNA]</scope>
    <source>
        <tissue>Placenta</tissue>
    </source>
</reference>
<reference key="7">
    <citation type="journal article" date="1998" name="EMBO J.">
        <title>Evidence that P-TEFb alleviates the negative effect of DSIF on RNA polymerase II-dependent transcription in vitro.</title>
        <authorList>
            <person name="Wada T."/>
            <person name="Takagi T."/>
            <person name="Yamaguchi Y."/>
            <person name="Watanabe D."/>
            <person name="Handa H."/>
        </authorList>
    </citation>
    <scope>FUNCTION</scope>
</reference>
<reference key="8">
    <citation type="journal article" date="1998" name="Genes Dev.">
        <title>DSIF, a novel transcription elongation factor that regulates RNA polymerase II processivity, is composed of human Spt4 and Spt5 homologs.</title>
        <authorList>
            <person name="Wada T."/>
            <person name="Takagi T."/>
            <person name="Yamaguchi Y."/>
            <person name="Ferdous A."/>
            <person name="Imai T."/>
            <person name="Hirose S."/>
            <person name="Sugimoto S."/>
            <person name="Yano K."/>
            <person name="Hartzog G.A."/>
            <person name="Winston F."/>
            <person name="Buratowski S."/>
            <person name="Handa H."/>
        </authorList>
    </citation>
    <scope>FUNCTION</scope>
    <scope>INTERACTION WITH SUPT5H</scope>
</reference>
<reference key="9">
    <citation type="journal article" date="1999" name="Cell">
        <title>NELF, a multisubunit complex containing RD, cooperates with DSIF to repress RNA polymerase II elongation.</title>
        <authorList>
            <person name="Yamaguchi Y."/>
            <person name="Takagi T."/>
            <person name="Wada T."/>
            <person name="Yano K."/>
            <person name="Furuya A."/>
            <person name="Sugimoto S."/>
            <person name="Hasegawa J."/>
            <person name="Handa H."/>
        </authorList>
    </citation>
    <scope>FUNCTION</scope>
</reference>
<reference key="10">
    <citation type="journal article" date="1999" name="J. Biol. Chem.">
        <title>Structure and function of the human transcription elongation factor DSIF.</title>
        <authorList>
            <person name="Yamaguchi Y."/>
            <person name="Wada T."/>
            <person name="Watanabe D."/>
            <person name="Takagi T."/>
            <person name="Hasegawa J."/>
            <person name="Handa H."/>
        </authorList>
    </citation>
    <scope>FUNCTION</scope>
    <scope>INTERACTION WITH SUPT5H</scope>
</reference>
<reference key="11">
    <citation type="journal article" date="1999" name="Mol. Cell. Biol.">
        <title>Tat-SF1 protein associates with RAP30 and human SPT5 proteins.</title>
        <authorList>
            <person name="Kim J.B."/>
            <person name="Yamaguchi Y."/>
            <person name="Wada T."/>
            <person name="Handa H."/>
            <person name="Sharp P.A."/>
        </authorList>
    </citation>
    <scope>FUNCTION</scope>
</reference>
<reference key="12">
    <citation type="journal article" date="2000" name="Mol. Cell">
        <title>FACT relieves DSIF/NELF-mediated inhibition of transcriptional elongation and reveals functional differences between P-TEFb and TFIIH.</title>
        <authorList>
            <person name="Wada T."/>
            <person name="Orphanides G."/>
            <person name="Hasegawa J."/>
            <person name="Kim D.-K."/>
            <person name="Shima D."/>
            <person name="Yamaguchi Y."/>
            <person name="Fukuda A."/>
            <person name="Hisatake K."/>
            <person name="Oh S."/>
            <person name="Reinberg D."/>
            <person name="Handa H."/>
        </authorList>
    </citation>
    <scope>FUNCTION</scope>
</reference>
<reference key="13">
    <citation type="journal article" date="2000" name="Mol. Cell. Biol.">
        <title>Domains in the SPT5 protein that modulate its transcriptional regulatory properties.</title>
        <authorList>
            <person name="Ivanov D."/>
            <person name="Kwak Y.T."/>
            <person name="Guo J."/>
            <person name="Gaynor R.B."/>
        </authorList>
    </citation>
    <scope>INTERACTION WITH SUPT5H</scope>
</reference>
<reference key="14">
    <citation type="journal article" date="2001" name="J. Biol. Chem.">
        <title>DSIF and NELF interact with RNA polymerase II elongation complex and HIV-1 Tat stimulates P-TEFb-mediated phosphorylation of RNA polymerase II and DSIF during transcription elongation.</title>
        <authorList>
            <person name="Ping Y.-H."/>
            <person name="Rana T.M."/>
        </authorList>
    </citation>
    <scope>FUNCTION</scope>
</reference>
<reference key="15">
    <citation type="journal article" date="2001" name="J. Biol. Chem.">
        <title>A highly purified RNA polymerase II elongation control system.</title>
        <authorList>
            <person name="Renner D.B."/>
            <person name="Yamaguchi Y."/>
            <person name="Wada T."/>
            <person name="Handa H."/>
            <person name="Price D.H."/>
        </authorList>
    </citation>
    <scope>FUNCTION</scope>
</reference>
<reference key="16">
    <citation type="journal article" date="2003" name="Genes Cells">
        <title>Structure-function analysis of human Spt4: evidence that hSpt4 and hSpt5 exert their roles in transcriptional elongation as parts of the DSIF complex.</title>
        <authorList>
            <person name="Kim D.-K."/>
            <person name="Inukai N."/>
            <person name="Yamada T."/>
            <person name="Furuya A."/>
            <person name="Sato H."/>
            <person name="Yamaguchi Y."/>
            <person name="Wada T."/>
            <person name="Handa H."/>
        </authorList>
    </citation>
    <scope>FUNCTION</scope>
    <scope>INTERACTION WITH SUPT5H</scope>
</reference>
<reference key="17">
    <citation type="journal article" date="2003" name="Mol. Cell">
        <title>Methylation of SPT5 regulates its interaction with RNA polymerase II and transcriptional elongation properties.</title>
        <authorList>
            <person name="Kwak Y.T."/>
            <person name="Guo J."/>
            <person name="Prajapati S."/>
            <person name="Park K.-J."/>
            <person name="Surabhi R.M."/>
            <person name="Miller B."/>
            <person name="Gehrig P."/>
            <person name="Gaynor R.B."/>
        </authorList>
    </citation>
    <scope>FUNCTION</scope>
    <scope>IDENTIFICATION BY MASS SPECTROMETRY</scope>
    <scope>INTERACTION WITH SUPT5H</scope>
</reference>
<reference key="18">
    <citation type="journal article" date="2004" name="Curr. Biol.">
        <title>Locus-specific requirements for Spt5 in transcriptional activation and repression in Drosophila.</title>
        <authorList>
            <person name="Jennings B.H."/>
            <person name="Shah S."/>
            <person name="Yamaguchi Y."/>
            <person name="Seki M."/>
            <person name="Phillips R.G."/>
            <person name="Handa H."/>
            <person name="Ish-Horowicz D."/>
        </authorList>
    </citation>
    <scope>FUNCTION</scope>
</reference>
<reference key="19">
    <citation type="journal article" date="2004" name="Mol. Cell. Biol.">
        <title>Human Spt6 stimulates transcription elongation by RNA polymerase II in vitro.</title>
        <authorList>
            <person name="Endoh M."/>
            <person name="Zhu W."/>
            <person name="Hasegawa J."/>
            <person name="Watanabe H."/>
            <person name="Kim D.-K."/>
            <person name="Aida M."/>
            <person name="Inukai N."/>
            <person name="Narita T."/>
            <person name="Yamada T."/>
            <person name="Furuya A."/>
            <person name="Sato H."/>
            <person name="Yamaguchi Y."/>
            <person name="Mandal S.S."/>
            <person name="Reinberg D."/>
            <person name="Wada T."/>
            <person name="Handa H."/>
        </authorList>
    </citation>
    <scope>INTERACTION WITH SUPT5H</scope>
</reference>
<reference key="20">
    <citation type="journal article" date="2004" name="Proc. Natl. Acad. Sci. U.S.A.">
        <title>Functional interactions of RNA-capping enzyme with factors that positively and negatively regulate promoter escape by RNA polymerase II.</title>
        <authorList>
            <person name="Mandal S.S."/>
            <person name="Chu C."/>
            <person name="Wada T."/>
            <person name="Handa H."/>
            <person name="Shatkin A.J."/>
            <person name="Reinberg D."/>
        </authorList>
    </citation>
    <scope>FUNCTION</scope>
</reference>
<reference key="21">
    <citation type="journal article" date="2005" name="Proc. Natl. Acad. Sci. U.S.A.">
        <title>A negative elongation factor for human RNA polymerase II inhibits the anti-arrest transcript-cleavage factor TFIIS.</title>
        <authorList>
            <person name="Palangat M."/>
            <person name="Renner D.B."/>
            <person name="Price D.H."/>
            <person name="Landick R."/>
        </authorList>
    </citation>
    <scope>FUNCTION</scope>
</reference>
<reference key="22">
    <citation type="journal article" date="2011" name="BMC Syst. Biol.">
        <title>Initial characterization of the human central proteome.</title>
        <authorList>
            <person name="Burkard T.R."/>
            <person name="Planyavsky M."/>
            <person name="Kaupe I."/>
            <person name="Breitwieser F.P."/>
            <person name="Buerckstuemmer T."/>
            <person name="Bennett K.L."/>
            <person name="Superti-Furga G."/>
            <person name="Colinge J."/>
        </authorList>
    </citation>
    <scope>IDENTIFICATION BY MASS SPECTROMETRY [LARGE SCALE ANALYSIS]</scope>
</reference>
<reference key="23">
    <citation type="journal article" date="2012" name="Proc. Natl. Acad. Sci. U.S.A.">
        <title>N-terminal acetylome analyses and functional insights of the N-terminal acetyltransferase NatB.</title>
        <authorList>
            <person name="Van Damme P."/>
            <person name="Lasa M."/>
            <person name="Polevoda B."/>
            <person name="Gazquez C."/>
            <person name="Elosegui-Artola A."/>
            <person name="Kim D.S."/>
            <person name="De Juan-Pardo E."/>
            <person name="Demeyer K."/>
            <person name="Hole K."/>
            <person name="Larrea E."/>
            <person name="Timmerman E."/>
            <person name="Prieto J."/>
            <person name="Arnesen T."/>
            <person name="Sherman F."/>
            <person name="Gevaert K."/>
            <person name="Aldabe R."/>
        </authorList>
    </citation>
    <scope>ACETYLATION [LARGE SCALE ANALYSIS] AT ALA-2</scope>
    <scope>CLEAVAGE OF INITIATOR METHIONINE [LARGE SCALE ANALYSIS]</scope>
    <scope>IDENTIFICATION BY MASS SPECTROMETRY [LARGE SCALE ANALYSIS]</scope>
</reference>
<reference key="24">
    <citation type="journal article" date="2023" name="Cell">
        <title>Orphan quality control shapes network dynamics and gene expression.</title>
        <authorList>
            <person name="Mark K.G."/>
            <person name="Kolla S."/>
            <person name="Aguirre J.D."/>
            <person name="Garshott D.M."/>
            <person name="Schmitt S."/>
            <person name="Haakonsen D.L."/>
            <person name="Xu C."/>
            <person name="Kater L."/>
            <person name="Kempf G."/>
            <person name="Martinez-Gonzalez B."/>
            <person name="Akopian D."/>
            <person name="See S.K."/>
            <person name="Thomae N.H."/>
            <person name="Rape M."/>
        </authorList>
    </citation>
    <scope>UBIQUITINATION</scope>
</reference>
<reference key="25">
    <citation type="journal article" date="2010" name="Biochem. J.">
        <title>Crystal structure of the human transcription elongation factor DSIF hSpt4 subunit in complex with the hSpt5 dimerization interface.</title>
        <authorList>
            <person name="Wenzel S."/>
            <person name="Martins B.M."/>
            <person name="Rosch P."/>
            <person name="Wohrl B.M."/>
        </authorList>
    </citation>
    <scope>X-RAY CRYSTALLOGRAPHY (1.55 ANGSTROMS) OF 2-117 IN COMPLEX WITH SPT5H</scope>
</reference>
<reference key="26">
    <citation type="journal article" date="2017" name="Nat. Struct. Mol. Biol.">
        <title>Structure of a transcribing RNA polymerase II-DSIF complex reveals a multidentate DNA-RNA clamp.</title>
        <authorList>
            <person name="Bernecky C."/>
            <person name="Plitzko J.M."/>
            <person name="Cramer P."/>
        </authorList>
    </citation>
    <scope>STRUCTURE BY ELECTRON MICROSCOPY (3.70 ANGSTROMS) IN COMPLEX WITH ZN(2+)</scope>
    <scope>SUBUNIT</scope>
</reference>
<protein>
    <recommendedName>
        <fullName>Transcription elongation factor SPT4</fullName>
        <shortName>hSPT4</shortName>
    </recommendedName>
    <alternativeName>
        <fullName>DRB sensitivity-inducing factor 14 kDa subunit</fullName>
        <shortName>DSIF p14</shortName>
    </alternativeName>
    <alternativeName>
        <fullName>DRB sensitivity-inducing factor small subunit</fullName>
        <shortName>DSIF small subunit</shortName>
    </alternativeName>
</protein>
<proteinExistence type="evidence at protein level"/>
<sequence>MALETVPKDLRHLRACLLCSLVKTIDQFEYDGCDNCDAYLQMKGNREMVYDCTSSSFDGIIAMMSPEDSWVSKWQRVSNFKPGVYAVSVTGRLPQGIVRELKSRGVAYKSRDTAIKT</sequence>
<feature type="initiator methionine" description="Removed" evidence="24">
    <location>
        <position position="1"/>
    </location>
</feature>
<feature type="chain" id="PRO_0000210325" description="Transcription elongation factor SPT4">
    <location>
        <begin position="2"/>
        <end position="117"/>
    </location>
</feature>
<feature type="zinc finger region" description="C4-type" evidence="1">
    <location>
        <begin position="16"/>
        <end position="36"/>
    </location>
</feature>
<feature type="region of interest" description="Interaction with SUPT5H">
    <location>
        <begin position="2"/>
        <end position="40"/>
    </location>
</feature>
<feature type="binding site" evidence="16 23">
    <location>
        <position position="16"/>
    </location>
    <ligand>
        <name>Zn(2+)</name>
        <dbReference type="ChEBI" id="CHEBI:29105"/>
    </ligand>
</feature>
<feature type="binding site" evidence="16 23">
    <location>
        <position position="19"/>
    </location>
    <ligand>
        <name>Zn(2+)</name>
        <dbReference type="ChEBI" id="CHEBI:29105"/>
    </ligand>
</feature>
<feature type="binding site" evidence="16 23">
    <location>
        <position position="33"/>
    </location>
    <ligand>
        <name>Zn(2+)</name>
        <dbReference type="ChEBI" id="CHEBI:29105"/>
    </ligand>
</feature>
<feature type="binding site" evidence="16 23">
    <location>
        <position position="36"/>
    </location>
    <ligand>
        <name>Zn(2+)</name>
        <dbReference type="ChEBI" id="CHEBI:29105"/>
    </ligand>
</feature>
<feature type="modified residue" description="N-acetylalanine" evidence="24">
    <location>
        <position position="2"/>
    </location>
</feature>
<feature type="sequence conflict" description="In Ref. 3; BAC85230." evidence="22" ref="3">
    <original>QGIVRELKSRGVAYKSRDTAIKT</original>
    <variation>HAKDSRSNVNKYEPRESSEGHDTCLASLFHSLRHSNSLFAL</variation>
    <location>
        <begin position="95"/>
        <end position="117"/>
    </location>
</feature>
<feature type="helix" evidence="25">
    <location>
        <begin position="3"/>
        <end position="5"/>
    </location>
</feature>
<feature type="strand" evidence="25">
    <location>
        <begin position="8"/>
        <end position="10"/>
    </location>
</feature>
<feature type="strand" evidence="25">
    <location>
        <begin position="13"/>
        <end position="16"/>
    </location>
</feature>
<feature type="turn" evidence="25">
    <location>
        <begin position="17"/>
        <end position="19"/>
    </location>
</feature>
<feature type="strand" evidence="25">
    <location>
        <begin position="21"/>
        <end position="24"/>
    </location>
</feature>
<feature type="helix" evidence="25">
    <location>
        <begin position="25"/>
        <end position="31"/>
    </location>
</feature>
<feature type="turn" evidence="25">
    <location>
        <begin position="34"/>
        <end position="36"/>
    </location>
</feature>
<feature type="helix" evidence="25">
    <location>
        <begin position="37"/>
        <end position="40"/>
    </location>
</feature>
<feature type="helix" evidence="25">
    <location>
        <begin position="46"/>
        <end position="52"/>
    </location>
</feature>
<feature type="strand" evidence="25">
    <location>
        <begin position="53"/>
        <end position="55"/>
    </location>
</feature>
<feature type="strand" evidence="25">
    <location>
        <begin position="57"/>
        <end position="64"/>
    </location>
</feature>
<feature type="helix" evidence="25">
    <location>
        <begin position="66"/>
        <end position="68"/>
    </location>
</feature>
<feature type="helix" evidence="25">
    <location>
        <begin position="70"/>
        <end position="74"/>
    </location>
</feature>
<feature type="strand" evidence="25">
    <location>
        <begin position="82"/>
        <end position="89"/>
    </location>
</feature>
<feature type="helix" evidence="25">
    <location>
        <begin position="95"/>
        <end position="103"/>
    </location>
</feature>
<dbReference type="EMBL" id="U38818">
    <property type="protein sequence ID" value="AAB18674.1"/>
    <property type="molecule type" value="mRNA"/>
</dbReference>
<dbReference type="EMBL" id="U38817">
    <property type="protein sequence ID" value="AAB18675.1"/>
    <property type="molecule type" value="mRNA"/>
</dbReference>
<dbReference type="EMBL" id="U43923">
    <property type="protein sequence ID" value="AAB07814.1"/>
    <property type="molecule type" value="mRNA"/>
</dbReference>
<dbReference type="EMBL" id="AK129758">
    <property type="protein sequence ID" value="BAC85230.1"/>
    <property type="molecule type" value="mRNA"/>
</dbReference>
<dbReference type="EMBL" id="AK311986">
    <property type="protein sequence ID" value="BAG34925.1"/>
    <property type="molecule type" value="mRNA"/>
</dbReference>
<dbReference type="EMBL" id="CR407663">
    <property type="protein sequence ID" value="CAG28591.1"/>
    <property type="molecule type" value="mRNA"/>
</dbReference>
<dbReference type="EMBL" id="CH471109">
    <property type="protein sequence ID" value="EAW94464.1"/>
    <property type="molecule type" value="Genomic_DNA"/>
</dbReference>
<dbReference type="EMBL" id="CH471109">
    <property type="protein sequence ID" value="EAW94466.1"/>
    <property type="molecule type" value="Genomic_DNA"/>
</dbReference>
<dbReference type="EMBL" id="BC002802">
    <property type="protein sequence ID" value="AAH02802.1"/>
    <property type="molecule type" value="mRNA"/>
</dbReference>
<dbReference type="CCDS" id="CCDS11606.1"/>
<dbReference type="RefSeq" id="NP_003159.1">
    <property type="nucleotide sequence ID" value="NM_003168.3"/>
</dbReference>
<dbReference type="PDB" id="3H7H">
    <property type="method" value="X-ray"/>
    <property type="resolution" value="1.55 A"/>
    <property type="chains" value="A=2-117"/>
</dbReference>
<dbReference type="PDB" id="5OIK">
    <property type="method" value="EM"/>
    <property type="resolution" value="3.70 A"/>
    <property type="chains" value="Y=1-117"/>
</dbReference>
<dbReference type="PDB" id="6GMH">
    <property type="method" value="EM"/>
    <property type="resolution" value="3.10 A"/>
    <property type="chains" value="Y=1-117"/>
</dbReference>
<dbReference type="PDB" id="6GML">
    <property type="method" value="EM"/>
    <property type="resolution" value="3.20 A"/>
    <property type="chains" value="Y=1-117"/>
</dbReference>
<dbReference type="PDB" id="6TED">
    <property type="method" value="EM"/>
    <property type="resolution" value="3.10 A"/>
    <property type="chains" value="Y=1-117"/>
</dbReference>
<dbReference type="PDB" id="7OKY">
    <property type="method" value="EM"/>
    <property type="resolution" value="4.14 A"/>
    <property type="chains" value="Y=1-117"/>
</dbReference>
<dbReference type="PDB" id="7UND">
    <property type="method" value="EM"/>
    <property type="resolution" value="3.00 A"/>
    <property type="chains" value="Y=1-117"/>
</dbReference>
<dbReference type="PDB" id="7YCX">
    <property type="method" value="EM"/>
    <property type="resolution" value="4.18 A"/>
    <property type="chains" value="i=1-117"/>
</dbReference>
<dbReference type="PDB" id="8A3Y">
    <property type="method" value="EM"/>
    <property type="resolution" value="3.30 A"/>
    <property type="chains" value="Y=1-117"/>
</dbReference>
<dbReference type="PDB" id="8P4C">
    <property type="method" value="EM"/>
    <property type="resolution" value="3.80 A"/>
    <property type="chains" value="Y=1-117"/>
</dbReference>
<dbReference type="PDB" id="8P4D">
    <property type="method" value="EM"/>
    <property type="resolution" value="3.60 A"/>
    <property type="chains" value="Y=1-117"/>
</dbReference>
<dbReference type="PDB" id="8P4F">
    <property type="method" value="EM"/>
    <property type="resolution" value="4.00 A"/>
    <property type="chains" value="Y=1-117"/>
</dbReference>
<dbReference type="PDB" id="8UHA">
    <property type="method" value="EM"/>
    <property type="resolution" value="3.50 A"/>
    <property type="chains" value="Y=1-117"/>
</dbReference>
<dbReference type="PDB" id="8UHD">
    <property type="method" value="EM"/>
    <property type="resolution" value="2.80 A"/>
    <property type="chains" value="Y=1-117"/>
</dbReference>
<dbReference type="PDB" id="8W8E">
    <property type="method" value="EM"/>
    <property type="resolution" value="3.90 A"/>
    <property type="chains" value="Y=1-117"/>
</dbReference>
<dbReference type="PDB" id="8W8F">
    <property type="method" value="EM"/>
    <property type="resolution" value="4.00 A"/>
    <property type="chains" value="Y=1-117"/>
</dbReference>
<dbReference type="PDB" id="9EGX">
    <property type="method" value="EM"/>
    <property type="resolution" value="2.90 A"/>
    <property type="chains" value="Y=1-117"/>
</dbReference>
<dbReference type="PDB" id="9EGY">
    <property type="method" value="EM"/>
    <property type="resolution" value="2.90 A"/>
    <property type="chains" value="Y=1-117"/>
</dbReference>
<dbReference type="PDB" id="9EGZ">
    <property type="method" value="EM"/>
    <property type="resolution" value="2.90 A"/>
    <property type="chains" value="Y=1-117"/>
</dbReference>
<dbReference type="PDB" id="9EH0">
    <property type="method" value="EM"/>
    <property type="resolution" value="3.60 A"/>
    <property type="chains" value="Y=1-117"/>
</dbReference>
<dbReference type="PDB" id="9EH1">
    <property type="method" value="EM"/>
    <property type="resolution" value="3.10 A"/>
    <property type="chains" value="Y=2-117"/>
</dbReference>
<dbReference type="PDB" id="9EH2">
    <property type="method" value="EM"/>
    <property type="resolution" value="3.10 A"/>
    <property type="chains" value="Y=1-117"/>
</dbReference>
<dbReference type="PDB" id="9J0N">
    <property type="method" value="EM"/>
    <property type="resolution" value="3.40 A"/>
    <property type="chains" value="Y=1-117"/>
</dbReference>
<dbReference type="PDB" id="9J0O">
    <property type="method" value="EM"/>
    <property type="resolution" value="3.30 A"/>
    <property type="chains" value="Y=1-117"/>
</dbReference>
<dbReference type="PDB" id="9J0P">
    <property type="method" value="EM"/>
    <property type="resolution" value="3.30 A"/>
    <property type="chains" value="Y=1-117"/>
</dbReference>
<dbReference type="PDBsum" id="3H7H"/>
<dbReference type="PDBsum" id="5OIK"/>
<dbReference type="PDBsum" id="6GMH"/>
<dbReference type="PDBsum" id="6GML"/>
<dbReference type="PDBsum" id="6TED"/>
<dbReference type="PDBsum" id="7OKY"/>
<dbReference type="PDBsum" id="7UND"/>
<dbReference type="PDBsum" id="7YCX"/>
<dbReference type="PDBsum" id="8A3Y"/>
<dbReference type="PDBsum" id="8P4C"/>
<dbReference type="PDBsum" id="8P4D"/>
<dbReference type="PDBsum" id="8P4F"/>
<dbReference type="PDBsum" id="8UHA"/>
<dbReference type="PDBsum" id="8UHD"/>
<dbReference type="PDBsum" id="8W8E"/>
<dbReference type="PDBsum" id="8W8F"/>
<dbReference type="PDBsum" id="9EGX"/>
<dbReference type="PDBsum" id="9EGY"/>
<dbReference type="PDBsum" id="9EGZ"/>
<dbReference type="PDBsum" id="9EH0"/>
<dbReference type="PDBsum" id="9EH1"/>
<dbReference type="PDBsum" id="9EH2"/>
<dbReference type="PDBsum" id="9J0N"/>
<dbReference type="PDBsum" id="9J0O"/>
<dbReference type="PDBsum" id="9J0P"/>
<dbReference type="EMDB" id="EMD-0031"/>
<dbReference type="EMDB" id="EMD-0038"/>
<dbReference type="EMDB" id="EMD-10480"/>
<dbReference type="EMDB" id="EMD-12966"/>
<dbReference type="EMDB" id="EMD-12967"/>
<dbReference type="EMDB" id="EMD-12968"/>
<dbReference type="EMDB" id="EMD-12970"/>
<dbReference type="EMDB" id="EMD-12971"/>
<dbReference type="EMDB" id="EMD-12972"/>
<dbReference type="EMDB" id="EMD-12973"/>
<dbReference type="EMDB" id="EMD-17405"/>
<dbReference type="EMDB" id="EMD-17406"/>
<dbReference type="EMDB" id="EMD-17408"/>
<dbReference type="EMDB" id="EMD-26621"/>
<dbReference type="EMDB" id="EMD-33741"/>
<dbReference type="EMDB" id="EMD-37352"/>
<dbReference type="EMDB" id="EMD-37353"/>
<dbReference type="EMDB" id="EMD-3817"/>
<dbReference type="EMDB" id="EMD-42267"/>
<dbReference type="EMDB" id="EMD-42270"/>
<dbReference type="EMDB" id="EMD-48039"/>
<dbReference type="EMDB" id="EMD-48040"/>
<dbReference type="EMDB" id="EMD-48041"/>
<dbReference type="EMDB" id="EMD-48042"/>
<dbReference type="EMDB" id="EMD-48043"/>
<dbReference type="EMDB" id="EMD-48044"/>
<dbReference type="EMDB" id="EMD-61058"/>
<dbReference type="EMDB" id="EMD-61059"/>
<dbReference type="EMDB" id="EMD-61060"/>
<dbReference type="SMR" id="P63272"/>
<dbReference type="BioGRID" id="112695">
    <property type="interactions" value="66"/>
</dbReference>
<dbReference type="ComplexPortal" id="CPX-891">
    <property type="entry name" value="DSIF transcription elongation factor complex"/>
</dbReference>
<dbReference type="CORUM" id="P63272"/>
<dbReference type="DIP" id="DIP-40644N"/>
<dbReference type="FunCoup" id="P63272">
    <property type="interactions" value="2688"/>
</dbReference>
<dbReference type="IntAct" id="P63272">
    <property type="interactions" value="31"/>
</dbReference>
<dbReference type="MINT" id="P63272"/>
<dbReference type="STRING" id="9606.ENSP00000225504"/>
<dbReference type="GlyGen" id="P63272">
    <property type="glycosylation" value="1 site, 1 O-linked glycan (1 site)"/>
</dbReference>
<dbReference type="iPTMnet" id="P63272"/>
<dbReference type="PhosphoSitePlus" id="P63272"/>
<dbReference type="BioMuta" id="SUPT4H1"/>
<dbReference type="DMDM" id="54039624"/>
<dbReference type="jPOST" id="P63272"/>
<dbReference type="MassIVE" id="P63272"/>
<dbReference type="PaxDb" id="9606-ENSP00000225504"/>
<dbReference type="PeptideAtlas" id="P63272"/>
<dbReference type="ProteomicsDB" id="57516"/>
<dbReference type="Pumba" id="P63272"/>
<dbReference type="Antibodypedia" id="18387">
    <property type="antibodies" value="170 antibodies from 27 providers"/>
</dbReference>
<dbReference type="DNASU" id="6827"/>
<dbReference type="Ensembl" id="ENST00000225504.8">
    <property type="protein sequence ID" value="ENSP00000225504.3"/>
    <property type="gene ID" value="ENSG00000213246.7"/>
</dbReference>
<dbReference type="Ensembl" id="ENST00000580947.1">
    <property type="protein sequence ID" value="ENSP00000462670.1"/>
    <property type="gene ID" value="ENSG00000213246.7"/>
</dbReference>
<dbReference type="GeneID" id="6827"/>
<dbReference type="KEGG" id="hsa:6827"/>
<dbReference type="MANE-Select" id="ENST00000225504.8">
    <property type="protein sequence ID" value="ENSP00000225504.3"/>
    <property type="RefSeq nucleotide sequence ID" value="NM_003168.3"/>
    <property type="RefSeq protein sequence ID" value="NP_003159.1"/>
</dbReference>
<dbReference type="UCSC" id="uc002iwe.3">
    <property type="organism name" value="human"/>
</dbReference>
<dbReference type="AGR" id="HGNC:11467"/>
<dbReference type="CTD" id="6827"/>
<dbReference type="DisGeNET" id="6827"/>
<dbReference type="GeneCards" id="SUPT4H1"/>
<dbReference type="HGNC" id="HGNC:11467">
    <property type="gene designation" value="SUPT4H1"/>
</dbReference>
<dbReference type="HPA" id="ENSG00000213246">
    <property type="expression patterns" value="Low tissue specificity"/>
</dbReference>
<dbReference type="MIM" id="603555">
    <property type="type" value="gene"/>
</dbReference>
<dbReference type="neXtProt" id="NX_P63272"/>
<dbReference type="OpenTargets" id="ENSG00000213246"/>
<dbReference type="PharmGKB" id="PA36253"/>
<dbReference type="VEuPathDB" id="HostDB:ENSG00000213246"/>
<dbReference type="eggNOG" id="KOG3490">
    <property type="taxonomic scope" value="Eukaryota"/>
</dbReference>
<dbReference type="GeneTree" id="ENSGT00390000018559"/>
<dbReference type="HOGENOM" id="CLU_138052_3_0_1"/>
<dbReference type="InParanoid" id="P63272"/>
<dbReference type="OMA" id="FDGMIAV"/>
<dbReference type="OrthoDB" id="248751at2759"/>
<dbReference type="PAN-GO" id="P63272">
    <property type="GO annotations" value="5 GO annotations based on evolutionary models"/>
</dbReference>
<dbReference type="PhylomeDB" id="P63272"/>
<dbReference type="TreeFam" id="TF300105"/>
<dbReference type="PathwayCommons" id="P63272"/>
<dbReference type="Reactome" id="R-HSA-112382">
    <property type="pathway name" value="Formation of RNA Pol II elongation complex"/>
</dbReference>
<dbReference type="Reactome" id="R-HSA-113418">
    <property type="pathway name" value="Formation of the Early Elongation Complex"/>
</dbReference>
<dbReference type="Reactome" id="R-HSA-167152">
    <property type="pathway name" value="Formation of HIV elongation complex in the absence of HIV Tat"/>
</dbReference>
<dbReference type="Reactome" id="R-HSA-167158">
    <property type="pathway name" value="Formation of the HIV-1 Early Elongation Complex"/>
</dbReference>
<dbReference type="Reactome" id="R-HSA-167200">
    <property type="pathway name" value="Formation of HIV-1 elongation complex containing HIV-1 Tat"/>
</dbReference>
<dbReference type="Reactome" id="R-HSA-167238">
    <property type="pathway name" value="Pausing and recovery of Tat-mediated HIV elongation"/>
</dbReference>
<dbReference type="Reactome" id="R-HSA-167242">
    <property type="pathway name" value="Abortive elongation of HIV-1 transcript in the absence of Tat"/>
</dbReference>
<dbReference type="Reactome" id="R-HSA-167243">
    <property type="pathway name" value="Tat-mediated HIV elongation arrest and recovery"/>
</dbReference>
<dbReference type="Reactome" id="R-HSA-167246">
    <property type="pathway name" value="Tat-mediated elongation of the HIV-1 transcript"/>
</dbReference>
<dbReference type="Reactome" id="R-HSA-167287">
    <property type="pathway name" value="HIV elongation arrest and recovery"/>
</dbReference>
<dbReference type="Reactome" id="R-HSA-167290">
    <property type="pathway name" value="Pausing and recovery of HIV elongation"/>
</dbReference>
<dbReference type="Reactome" id="R-HSA-674695">
    <property type="pathway name" value="RNA Polymerase II Pre-transcription Events"/>
</dbReference>
<dbReference type="Reactome" id="R-HSA-6796648">
    <property type="pathway name" value="TP53 Regulates Transcription of DNA Repair Genes"/>
</dbReference>
<dbReference type="Reactome" id="R-HSA-6807505">
    <property type="pathway name" value="RNA polymerase II transcribes snRNA genes"/>
</dbReference>
<dbReference type="Reactome" id="R-HSA-75955">
    <property type="pathway name" value="RNA Polymerase II Transcription Elongation"/>
</dbReference>
<dbReference type="SignaLink" id="P63272"/>
<dbReference type="BioGRID-ORCS" id="6827">
    <property type="hits" value="442 hits in 1155 CRISPR screens"/>
</dbReference>
<dbReference type="ChiTaRS" id="SUPT4H1">
    <property type="organism name" value="human"/>
</dbReference>
<dbReference type="EvolutionaryTrace" id="P63272"/>
<dbReference type="GeneWiki" id="SUPT4H1"/>
<dbReference type="GenomeRNAi" id="6827"/>
<dbReference type="Pharos" id="P63272">
    <property type="development level" value="Tbio"/>
</dbReference>
<dbReference type="PRO" id="PR:P63272"/>
<dbReference type="Proteomes" id="UP000005640">
    <property type="component" value="Chromosome 17"/>
</dbReference>
<dbReference type="RNAct" id="P63272">
    <property type="molecule type" value="protein"/>
</dbReference>
<dbReference type="Bgee" id="ENSG00000213246">
    <property type="expression patterns" value="Expressed in monocyte and 106 other cell types or tissues"/>
</dbReference>
<dbReference type="ExpressionAtlas" id="P63272">
    <property type="expression patterns" value="baseline and differential"/>
</dbReference>
<dbReference type="GO" id="GO:0032044">
    <property type="term" value="C:DSIF complex"/>
    <property type="evidence" value="ECO:0000314"/>
    <property type="project" value="UniProtKB"/>
</dbReference>
<dbReference type="GO" id="GO:0005654">
    <property type="term" value="C:nucleoplasm"/>
    <property type="evidence" value="ECO:0000314"/>
    <property type="project" value="HPA"/>
</dbReference>
<dbReference type="GO" id="GO:0005634">
    <property type="term" value="C:nucleus"/>
    <property type="evidence" value="ECO:0000314"/>
    <property type="project" value="ComplexPortal"/>
</dbReference>
<dbReference type="GO" id="GO:0046982">
    <property type="term" value="F:protein heterodimerization activity"/>
    <property type="evidence" value="ECO:0000353"/>
    <property type="project" value="UniProtKB"/>
</dbReference>
<dbReference type="GO" id="GO:0000993">
    <property type="term" value="F:RNA polymerase II complex binding"/>
    <property type="evidence" value="ECO:0000318"/>
    <property type="project" value="GO_Central"/>
</dbReference>
<dbReference type="GO" id="GO:0008270">
    <property type="term" value="F:zinc ion binding"/>
    <property type="evidence" value="ECO:0007669"/>
    <property type="project" value="UniProtKB-KW"/>
</dbReference>
<dbReference type="GO" id="GO:0032785">
    <property type="term" value="P:negative regulation of DNA-templated transcription, elongation"/>
    <property type="evidence" value="ECO:0000314"/>
    <property type="project" value="UniProtKB"/>
</dbReference>
<dbReference type="GO" id="GO:0000122">
    <property type="term" value="P:negative regulation of transcription by RNA polymerase II"/>
    <property type="evidence" value="ECO:0000314"/>
    <property type="project" value="UniProtKB"/>
</dbReference>
<dbReference type="GO" id="GO:0034244">
    <property type="term" value="P:negative regulation of transcription elongation by RNA polymerase II"/>
    <property type="evidence" value="ECO:0007669"/>
    <property type="project" value="Ensembl"/>
</dbReference>
<dbReference type="GO" id="GO:0032786">
    <property type="term" value="P:positive regulation of DNA-templated transcription, elongation"/>
    <property type="evidence" value="ECO:0000314"/>
    <property type="project" value="UniProtKB"/>
</dbReference>
<dbReference type="GO" id="GO:0045944">
    <property type="term" value="P:positive regulation of transcription by RNA polymerase II"/>
    <property type="evidence" value="ECO:0000314"/>
    <property type="project" value="UniProtKB"/>
</dbReference>
<dbReference type="GO" id="GO:0006355">
    <property type="term" value="P:regulation of DNA-templated transcription"/>
    <property type="evidence" value="ECO:0000304"/>
    <property type="project" value="ProtInc"/>
</dbReference>
<dbReference type="GO" id="GO:0034243">
    <property type="term" value="P:regulation of transcription elongation by RNA polymerase II"/>
    <property type="evidence" value="ECO:0000314"/>
    <property type="project" value="ComplexPortal"/>
</dbReference>
<dbReference type="GO" id="GO:0006368">
    <property type="term" value="P:transcription elongation by RNA polymerase II"/>
    <property type="evidence" value="ECO:0000314"/>
    <property type="project" value="UniProtKB"/>
</dbReference>
<dbReference type="GO" id="GO:0140673">
    <property type="term" value="P:transcription elongation-coupled chromatin remodeling"/>
    <property type="evidence" value="ECO:0007669"/>
    <property type="project" value="InterPro"/>
</dbReference>
<dbReference type="CDD" id="cd07973">
    <property type="entry name" value="Spt4"/>
    <property type="match status" value="1"/>
</dbReference>
<dbReference type="FunFam" id="3.30.40.210:FF:000006">
    <property type="entry name" value="Transcription elongation factor SPT4"/>
    <property type="match status" value="1"/>
</dbReference>
<dbReference type="Gene3D" id="3.30.40.210">
    <property type="match status" value="1"/>
</dbReference>
<dbReference type="InterPro" id="IPR029040">
    <property type="entry name" value="RPABC4/Spt4"/>
</dbReference>
<dbReference type="InterPro" id="IPR009287">
    <property type="entry name" value="Spt4"/>
</dbReference>
<dbReference type="InterPro" id="IPR022800">
    <property type="entry name" value="Spt4/RpoE2_Znf"/>
</dbReference>
<dbReference type="InterPro" id="IPR038510">
    <property type="entry name" value="Spt4_sf"/>
</dbReference>
<dbReference type="PANTHER" id="PTHR12882">
    <property type="entry name" value="SUPPRESSOR OF TY 4"/>
    <property type="match status" value="1"/>
</dbReference>
<dbReference type="PANTHER" id="PTHR12882:SF1">
    <property type="entry name" value="TRANSCRIPTION ELONGATION FACTOR SPT4"/>
    <property type="match status" value="1"/>
</dbReference>
<dbReference type="Pfam" id="PF06093">
    <property type="entry name" value="Spt4"/>
    <property type="match status" value="1"/>
</dbReference>
<dbReference type="PIRSF" id="PIRSF025023">
    <property type="entry name" value="Spt4"/>
    <property type="match status" value="1"/>
</dbReference>
<dbReference type="SMART" id="SM01389">
    <property type="entry name" value="Spt4"/>
    <property type="match status" value="1"/>
</dbReference>
<dbReference type="SUPFAM" id="SSF63393">
    <property type="entry name" value="RNA polymerase subunits"/>
    <property type="match status" value="1"/>
</dbReference>
<organism>
    <name type="scientific">Homo sapiens</name>
    <name type="common">Human</name>
    <dbReference type="NCBI Taxonomy" id="9606"/>
    <lineage>
        <taxon>Eukaryota</taxon>
        <taxon>Metazoa</taxon>
        <taxon>Chordata</taxon>
        <taxon>Craniata</taxon>
        <taxon>Vertebrata</taxon>
        <taxon>Euteleostomi</taxon>
        <taxon>Mammalia</taxon>
        <taxon>Eutheria</taxon>
        <taxon>Euarchontoglires</taxon>
        <taxon>Primates</taxon>
        <taxon>Haplorrhini</taxon>
        <taxon>Catarrhini</taxon>
        <taxon>Hominidae</taxon>
        <taxon>Homo</taxon>
    </lineage>
</organism>
<accession>P63272</accession>
<accession>B2R4X8</accession>
<accession>D3DTZ4</accession>
<accession>Q16550</accession>
<accession>Q62387</accession>
<accession>Q6ZP89</accession>
<keyword id="KW-0002">3D-structure</keyword>
<keyword id="KW-0007">Acetylation</keyword>
<keyword id="KW-0010">Activator</keyword>
<keyword id="KW-0479">Metal-binding</keyword>
<keyword id="KW-0539">Nucleus</keyword>
<keyword id="KW-1267">Proteomics identification</keyword>
<keyword id="KW-1185">Reference proteome</keyword>
<keyword id="KW-0678">Repressor</keyword>
<keyword id="KW-0804">Transcription</keyword>
<keyword id="KW-0805">Transcription regulation</keyword>
<keyword id="KW-0832">Ubl conjugation</keyword>
<keyword id="KW-0862">Zinc</keyword>
<keyword id="KW-0863">Zinc-finger</keyword>
<evidence type="ECO:0000255" key="1"/>
<evidence type="ECO:0000269" key="2">
    <source>
    </source>
</evidence>
<evidence type="ECO:0000269" key="3">
    <source>
    </source>
</evidence>
<evidence type="ECO:0000269" key="4">
    <source>
    </source>
</evidence>
<evidence type="ECO:0000269" key="5">
    <source>
    </source>
</evidence>
<evidence type="ECO:0000269" key="6">
    <source>
    </source>
</evidence>
<evidence type="ECO:0000269" key="7">
    <source>
    </source>
</evidence>
<evidence type="ECO:0000269" key="8">
    <source>
    </source>
</evidence>
<evidence type="ECO:0000269" key="9">
    <source>
    </source>
</evidence>
<evidence type="ECO:0000269" key="10">
    <source>
    </source>
</evidence>
<evidence type="ECO:0000269" key="11">
    <source>
    </source>
</evidence>
<evidence type="ECO:0000269" key="12">
    <source>
    </source>
</evidence>
<evidence type="ECO:0000269" key="13">
    <source>
    </source>
</evidence>
<evidence type="ECO:0000269" key="14">
    <source>
    </source>
</evidence>
<evidence type="ECO:0000269" key="15">
    <source>
    </source>
</evidence>
<evidence type="ECO:0000269" key="16">
    <source>
    </source>
</evidence>
<evidence type="ECO:0000269" key="17">
    <source>
    </source>
</evidence>
<evidence type="ECO:0000269" key="18">
    <source>
    </source>
</evidence>
<evidence type="ECO:0000269" key="19">
    <source>
    </source>
</evidence>
<evidence type="ECO:0000269" key="20">
    <source>
    </source>
</evidence>
<evidence type="ECO:0000269" key="21">
    <source>
    </source>
</evidence>
<evidence type="ECO:0000305" key="22"/>
<evidence type="ECO:0007744" key="23">
    <source>
        <dbReference type="PDB" id="5OIK"/>
    </source>
</evidence>
<evidence type="ECO:0007744" key="24">
    <source>
    </source>
</evidence>
<evidence type="ECO:0007829" key="25">
    <source>
        <dbReference type="PDB" id="3H7H"/>
    </source>
</evidence>